<dbReference type="EC" id="6.5.1.4" evidence="1"/>
<dbReference type="EMBL" id="CP000968">
    <property type="protein sequence ID" value="ACB08028.1"/>
    <property type="molecule type" value="Genomic_DNA"/>
</dbReference>
<dbReference type="RefSeq" id="WP_012309925.1">
    <property type="nucleotide sequence ID" value="NC_010482.1"/>
</dbReference>
<dbReference type="SMR" id="B1L6E9"/>
<dbReference type="FunCoup" id="B1L6E9">
    <property type="interactions" value="171"/>
</dbReference>
<dbReference type="STRING" id="374847.Kcr_1282"/>
<dbReference type="EnsemblBacteria" id="ACB08028">
    <property type="protein sequence ID" value="ACB08028"/>
    <property type="gene ID" value="Kcr_1282"/>
</dbReference>
<dbReference type="GeneID" id="6094559"/>
<dbReference type="KEGG" id="kcr:Kcr_1282"/>
<dbReference type="eggNOG" id="arCOG04125">
    <property type="taxonomic scope" value="Archaea"/>
</dbReference>
<dbReference type="HOGENOM" id="CLU_027882_0_0_2"/>
<dbReference type="InParanoid" id="B1L6E9"/>
<dbReference type="OrthoDB" id="7994at2157"/>
<dbReference type="PhylomeDB" id="B1L6E9"/>
<dbReference type="Proteomes" id="UP000001686">
    <property type="component" value="Chromosome"/>
</dbReference>
<dbReference type="GO" id="GO:0005737">
    <property type="term" value="C:cytoplasm"/>
    <property type="evidence" value="ECO:0007669"/>
    <property type="project" value="UniProtKB-SubCell"/>
</dbReference>
<dbReference type="GO" id="GO:0005524">
    <property type="term" value="F:ATP binding"/>
    <property type="evidence" value="ECO:0007669"/>
    <property type="project" value="UniProtKB-KW"/>
</dbReference>
<dbReference type="GO" id="GO:0003963">
    <property type="term" value="F:RNA-3'-phosphate cyclase activity"/>
    <property type="evidence" value="ECO:0000318"/>
    <property type="project" value="GO_Central"/>
</dbReference>
<dbReference type="GO" id="GO:0006396">
    <property type="term" value="P:RNA processing"/>
    <property type="evidence" value="ECO:0007669"/>
    <property type="project" value="InterPro"/>
</dbReference>
<dbReference type="CDD" id="cd00874">
    <property type="entry name" value="RNA_Cyclase_Class_II"/>
    <property type="match status" value="1"/>
</dbReference>
<dbReference type="FunFam" id="3.30.360.20:FF:000002">
    <property type="entry name" value="RNA terminal phosphate cyclase-like 1"/>
    <property type="match status" value="1"/>
</dbReference>
<dbReference type="Gene3D" id="3.65.10.20">
    <property type="entry name" value="RNA 3'-terminal phosphate cyclase domain"/>
    <property type="match status" value="1"/>
</dbReference>
<dbReference type="Gene3D" id="3.30.360.20">
    <property type="entry name" value="RNA 3'-terminal phosphate cyclase, insert domain"/>
    <property type="match status" value="1"/>
</dbReference>
<dbReference type="HAMAP" id="MF_00200">
    <property type="entry name" value="RTC"/>
    <property type="match status" value="1"/>
</dbReference>
<dbReference type="InterPro" id="IPR013791">
    <property type="entry name" value="RNA3'-term_phos_cycl_insert"/>
</dbReference>
<dbReference type="InterPro" id="IPR023797">
    <property type="entry name" value="RNA3'_phos_cyclase_dom"/>
</dbReference>
<dbReference type="InterPro" id="IPR037136">
    <property type="entry name" value="RNA3'_phos_cyclase_dom_sf"/>
</dbReference>
<dbReference type="InterPro" id="IPR000228">
    <property type="entry name" value="RNA3'_term_phos_cyc"/>
</dbReference>
<dbReference type="InterPro" id="IPR017770">
    <property type="entry name" value="RNA3'_term_phos_cyc_type_1"/>
</dbReference>
<dbReference type="InterPro" id="IPR020719">
    <property type="entry name" value="RNA3'_term_phos_cycl-like_CS"/>
</dbReference>
<dbReference type="InterPro" id="IPR013792">
    <property type="entry name" value="RNA3'P_cycl/enolpyr_Trfase_a/b"/>
</dbReference>
<dbReference type="InterPro" id="IPR036553">
    <property type="entry name" value="RPTC_insert"/>
</dbReference>
<dbReference type="NCBIfam" id="TIGR03399">
    <property type="entry name" value="RNA_3prim_cycl"/>
    <property type="match status" value="1"/>
</dbReference>
<dbReference type="PANTHER" id="PTHR11096">
    <property type="entry name" value="RNA 3' TERMINAL PHOSPHATE CYCLASE"/>
    <property type="match status" value="1"/>
</dbReference>
<dbReference type="PANTHER" id="PTHR11096:SF0">
    <property type="entry name" value="RNA 3'-TERMINAL PHOSPHATE CYCLASE"/>
    <property type="match status" value="1"/>
</dbReference>
<dbReference type="Pfam" id="PF01137">
    <property type="entry name" value="RTC"/>
    <property type="match status" value="1"/>
</dbReference>
<dbReference type="Pfam" id="PF05189">
    <property type="entry name" value="RTC_insert"/>
    <property type="match status" value="1"/>
</dbReference>
<dbReference type="PIRSF" id="PIRSF005378">
    <property type="entry name" value="RNA3'_term_phos_cycl_euk"/>
    <property type="match status" value="1"/>
</dbReference>
<dbReference type="SUPFAM" id="SSF55205">
    <property type="entry name" value="EPT/RTPC-like"/>
    <property type="match status" value="2"/>
</dbReference>
<dbReference type="SUPFAM" id="SSF52913">
    <property type="entry name" value="RNA 3'-terminal phosphate cyclase, RPTC, insert domain"/>
    <property type="match status" value="1"/>
</dbReference>
<dbReference type="PROSITE" id="PS01287">
    <property type="entry name" value="RTC"/>
    <property type="match status" value="1"/>
</dbReference>
<proteinExistence type="inferred from homology"/>
<keyword id="KW-0067">ATP-binding</keyword>
<keyword id="KW-0963">Cytoplasm</keyword>
<keyword id="KW-0436">Ligase</keyword>
<keyword id="KW-0547">Nucleotide-binding</keyword>
<keyword id="KW-1185">Reference proteome</keyword>
<comment type="function">
    <text evidence="1">Catalyzes the conversion of 3'-phosphate to a 2',3'-cyclic phosphodiester at the end of RNA. The mechanism of action of the enzyme occurs in 3 steps: (A) adenylation of the enzyme by ATP; (B) transfer of adenylate to an RNA-N3'P to produce RNA-N3'PP5'A; (C) and attack of the adjacent 2'-hydroxyl on the 3'-phosphorus in the diester linkage to produce the cyclic end product. The biological role of this enzyme is unknown but it is likely to function in some aspects of cellular RNA processing.</text>
</comment>
<comment type="catalytic activity">
    <reaction evidence="1">
        <text>a 3'-end 3'-phospho-ribonucleotide-RNA + ATP = a 3'-end 2',3'-cyclophospho-ribonucleotide-RNA + AMP + diphosphate</text>
        <dbReference type="Rhea" id="RHEA:23976"/>
        <dbReference type="Rhea" id="RHEA-COMP:10463"/>
        <dbReference type="Rhea" id="RHEA-COMP:10464"/>
        <dbReference type="ChEBI" id="CHEBI:30616"/>
        <dbReference type="ChEBI" id="CHEBI:33019"/>
        <dbReference type="ChEBI" id="CHEBI:83062"/>
        <dbReference type="ChEBI" id="CHEBI:83064"/>
        <dbReference type="ChEBI" id="CHEBI:456215"/>
        <dbReference type="EC" id="6.5.1.4"/>
    </reaction>
</comment>
<comment type="subcellular location">
    <subcellularLocation>
        <location evidence="1">Cytoplasm</location>
    </subcellularLocation>
</comment>
<comment type="similarity">
    <text evidence="1">Belongs to the RNA 3'-terminal cyclase family. Type 1 subfamily.</text>
</comment>
<name>RTCA_KORCO</name>
<organism>
    <name type="scientific">Korarchaeum cryptofilum (strain OPF8)</name>
    <dbReference type="NCBI Taxonomy" id="374847"/>
    <lineage>
        <taxon>Archaea</taxon>
        <taxon>Thermoproteota</taxon>
        <taxon>Candidatus Korarchaeia</taxon>
        <taxon>Candidatus Korarchaeales</taxon>
        <taxon>Candidatus Korarchaeaceae</taxon>
        <taxon>Candidatus Korarchaeum</taxon>
    </lineage>
</organism>
<sequence length="348" mass="37666">MEFIRIDGSYGEGGGSLLRYAIALSSVTMKPVEIYNIRVKRANPGLRPQHLNAVRALARITEATVEGDEVGSTALRFIPRKRAGGSFEIDIGTAGSISLIIQAILPACISSEEEISLRIRGGTDVPLAPPIDYMAEVFLRNMAPLGVRAELKLLRRGHYPRGGGIVELHASPSKLFPIDKVRGEKFDRVLGRCHAVKLPRSVVERISSSAIDTLRKEGLRVEIEEEWSEDGHLGPGAGIVLWTDSNPRIGADELGEKGKPSEVVGKNAASKLLDEIKAGMAFDSHMGDMIIPYLALARGRSRVGISKLTLHAESNIWLVERFLPVKFIVQGGVGSPTVIEVEGAGLEL</sequence>
<feature type="chain" id="PRO_1000099349" description="RNA 3'-terminal phosphate cyclase">
    <location>
        <begin position="1"/>
        <end position="348"/>
    </location>
</feature>
<feature type="active site" description="Tele-AMP-histidine intermediate" evidence="1">
    <location>
        <position position="311"/>
    </location>
</feature>
<feature type="binding site" evidence="1">
    <location>
        <position position="102"/>
    </location>
    <ligand>
        <name>ATP</name>
        <dbReference type="ChEBI" id="CHEBI:30616"/>
    </ligand>
</feature>
<feature type="binding site" evidence="1">
    <location>
        <begin position="285"/>
        <end position="288"/>
    </location>
    <ligand>
        <name>ATP</name>
        <dbReference type="ChEBI" id="CHEBI:30616"/>
    </ligand>
</feature>
<accession>B1L6E9</accession>
<protein>
    <recommendedName>
        <fullName evidence="1">RNA 3'-terminal phosphate cyclase</fullName>
        <shortName evidence="1">RNA cyclase</shortName>
        <shortName evidence="1">RNA-3'-phosphate cyclase</shortName>
        <ecNumber evidence="1">6.5.1.4</ecNumber>
    </recommendedName>
</protein>
<reference key="1">
    <citation type="journal article" date="2008" name="Proc. Natl. Acad. Sci. U.S.A.">
        <title>A korarchaeal genome reveals new insights into the evolution of the Archaea.</title>
        <authorList>
            <person name="Elkins J.G."/>
            <person name="Podar M."/>
            <person name="Graham D.E."/>
            <person name="Makarova K.S."/>
            <person name="Wolf Y."/>
            <person name="Randau L."/>
            <person name="Hedlund B.P."/>
            <person name="Brochier-Armanet C."/>
            <person name="Kunin V."/>
            <person name="Anderson I."/>
            <person name="Lapidus A."/>
            <person name="Goltsman E."/>
            <person name="Barry K."/>
            <person name="Koonin E.V."/>
            <person name="Hugenholtz P."/>
            <person name="Kyrpides N."/>
            <person name="Wanner G."/>
            <person name="Richardson P."/>
            <person name="Keller M."/>
            <person name="Stetter K.O."/>
        </authorList>
    </citation>
    <scope>NUCLEOTIDE SEQUENCE [LARGE SCALE GENOMIC DNA]</scope>
    <source>
        <strain>OPF8</strain>
    </source>
</reference>
<evidence type="ECO:0000255" key="1">
    <source>
        <dbReference type="HAMAP-Rule" id="MF_00200"/>
    </source>
</evidence>
<gene>
    <name evidence="1" type="primary">rtcA</name>
    <name type="ordered locus">Kcr_1282</name>
</gene>